<evidence type="ECO:0000255" key="1">
    <source>
        <dbReference type="HAMAP-Rule" id="MF_01860"/>
    </source>
</evidence>
<sequence length="248" mass="30052">MLYLHDVWVNWFEGEENGYNVCHFYEWRKDDTIELLDQVPLLKVDSTLYHYIENELLELPQKLLEDVHHKAYIRKNHERLQQEYCFVVTDGKGIIAIDTIGYNVPIRKSRLIPRQEQMVYEMVENVQAEKYEFQVEEMEKEHHILSPSPFVMNGLTRKERQLKQLLFMALDQLHTTKNTAEIRYWFTEWDPSAYGMVQHMEFEDIWAKLYDEAKTGWSEKHEQLCERLVKGQPFFEKLWEMENEQKVN</sequence>
<feature type="chain" id="PRO_1000188703" description="UPF0736 protein BAMEG_3400">
    <location>
        <begin position="1"/>
        <end position="248"/>
    </location>
</feature>
<dbReference type="EMBL" id="CP001215">
    <property type="protein sequence ID" value="ACP15777.1"/>
    <property type="molecule type" value="Genomic_DNA"/>
</dbReference>
<dbReference type="RefSeq" id="WP_000966134.1">
    <property type="nucleotide sequence ID" value="NC_012581.1"/>
</dbReference>
<dbReference type="SMR" id="C3LBU2"/>
<dbReference type="KEGG" id="bah:BAMEG_3400"/>
<dbReference type="HOGENOM" id="CLU_1101152_0_0_9"/>
<dbReference type="HAMAP" id="MF_01860">
    <property type="entry name" value="UPF0736"/>
    <property type="match status" value="1"/>
</dbReference>
<dbReference type="InterPro" id="IPR020909">
    <property type="entry name" value="UPF0736"/>
</dbReference>
<dbReference type="Pfam" id="PF12227">
    <property type="entry name" value="DUF3603"/>
    <property type="match status" value="1"/>
</dbReference>
<protein>
    <recommendedName>
        <fullName evidence="1">UPF0736 protein BAMEG_3400</fullName>
    </recommendedName>
</protein>
<proteinExistence type="inferred from homology"/>
<name>Y3400_BACAC</name>
<comment type="similarity">
    <text evidence="1">Belongs to the UPF0736 family.</text>
</comment>
<accession>C3LBU2</accession>
<reference key="1">
    <citation type="submission" date="2008-10" db="EMBL/GenBank/DDBJ databases">
        <title>Genome sequence of Bacillus anthracis str. CDC 684.</title>
        <authorList>
            <person name="Dodson R.J."/>
            <person name="Munk A.C."/>
            <person name="Brettin T."/>
            <person name="Bruce D."/>
            <person name="Detter C."/>
            <person name="Tapia R."/>
            <person name="Han C."/>
            <person name="Sutton G."/>
            <person name="Sims D."/>
        </authorList>
    </citation>
    <scope>NUCLEOTIDE SEQUENCE [LARGE SCALE GENOMIC DNA]</scope>
    <source>
        <strain>CDC 684 / NRRL 3495</strain>
    </source>
</reference>
<gene>
    <name type="ordered locus">BAMEG_3400</name>
</gene>
<organism>
    <name type="scientific">Bacillus anthracis (strain CDC 684 / NRRL 3495)</name>
    <dbReference type="NCBI Taxonomy" id="568206"/>
    <lineage>
        <taxon>Bacteria</taxon>
        <taxon>Bacillati</taxon>
        <taxon>Bacillota</taxon>
        <taxon>Bacilli</taxon>
        <taxon>Bacillales</taxon>
        <taxon>Bacillaceae</taxon>
        <taxon>Bacillus</taxon>
        <taxon>Bacillus cereus group</taxon>
    </lineage>
</organism>